<reference key="1">
    <citation type="journal article" date="2004" name="Nature">
        <title>Genome evolution in yeasts.</title>
        <authorList>
            <person name="Dujon B."/>
            <person name="Sherman D."/>
            <person name="Fischer G."/>
            <person name="Durrens P."/>
            <person name="Casaregola S."/>
            <person name="Lafontaine I."/>
            <person name="de Montigny J."/>
            <person name="Marck C."/>
            <person name="Neuveglise C."/>
            <person name="Talla E."/>
            <person name="Goffard N."/>
            <person name="Frangeul L."/>
            <person name="Aigle M."/>
            <person name="Anthouard V."/>
            <person name="Babour A."/>
            <person name="Barbe V."/>
            <person name="Barnay S."/>
            <person name="Blanchin S."/>
            <person name="Beckerich J.-M."/>
            <person name="Beyne E."/>
            <person name="Bleykasten C."/>
            <person name="Boisrame A."/>
            <person name="Boyer J."/>
            <person name="Cattolico L."/>
            <person name="Confanioleri F."/>
            <person name="de Daruvar A."/>
            <person name="Despons L."/>
            <person name="Fabre E."/>
            <person name="Fairhead C."/>
            <person name="Ferry-Dumazet H."/>
            <person name="Groppi A."/>
            <person name="Hantraye F."/>
            <person name="Hennequin C."/>
            <person name="Jauniaux N."/>
            <person name="Joyet P."/>
            <person name="Kachouri R."/>
            <person name="Kerrest A."/>
            <person name="Koszul R."/>
            <person name="Lemaire M."/>
            <person name="Lesur I."/>
            <person name="Ma L."/>
            <person name="Muller H."/>
            <person name="Nicaud J.-M."/>
            <person name="Nikolski M."/>
            <person name="Oztas S."/>
            <person name="Ozier-Kalogeropoulos O."/>
            <person name="Pellenz S."/>
            <person name="Potier S."/>
            <person name="Richard G.-F."/>
            <person name="Straub M.-L."/>
            <person name="Suleau A."/>
            <person name="Swennen D."/>
            <person name="Tekaia F."/>
            <person name="Wesolowski-Louvel M."/>
            <person name="Westhof E."/>
            <person name="Wirth B."/>
            <person name="Zeniou-Meyer M."/>
            <person name="Zivanovic Y."/>
            <person name="Bolotin-Fukuhara M."/>
            <person name="Thierry A."/>
            <person name="Bouchier C."/>
            <person name="Caudron B."/>
            <person name="Scarpelli C."/>
            <person name="Gaillardin C."/>
            <person name="Weissenbach J."/>
            <person name="Wincker P."/>
            <person name="Souciet J.-L."/>
        </authorList>
    </citation>
    <scope>NUCLEOTIDE SEQUENCE [LARGE SCALE GENOMIC DNA]</scope>
    <source>
        <strain>ATCC 8585 / CBS 2359 / DSM 70799 / NBRC 1267 / NRRL Y-1140 / WM37</strain>
    </source>
</reference>
<accession>Q6CQ02</accession>
<keyword id="KW-1185">Reference proteome</keyword>
<keyword id="KW-0749">Sporulation</keyword>
<feature type="chain" id="PRO_0000399059" description="Increased recombination centers protein 19">
    <location>
        <begin position="1"/>
        <end position="188"/>
    </location>
</feature>
<protein>
    <recommendedName>
        <fullName>Increased recombination centers protein 19</fullName>
    </recommendedName>
</protein>
<organism>
    <name type="scientific">Kluyveromyces lactis (strain ATCC 8585 / CBS 2359 / DSM 70799 / NBRC 1267 / NRRL Y-1140 / WM37)</name>
    <name type="common">Yeast</name>
    <name type="synonym">Candida sphaerica</name>
    <dbReference type="NCBI Taxonomy" id="284590"/>
    <lineage>
        <taxon>Eukaryota</taxon>
        <taxon>Fungi</taxon>
        <taxon>Dikarya</taxon>
        <taxon>Ascomycota</taxon>
        <taxon>Saccharomycotina</taxon>
        <taxon>Saccharomycetes</taxon>
        <taxon>Saccharomycetales</taxon>
        <taxon>Saccharomycetaceae</taxon>
        <taxon>Kluyveromyces</taxon>
    </lineage>
</organism>
<name>IRC19_KLULA</name>
<gene>
    <name type="primary">IRC19</name>
    <name type="synonym">RRG4</name>
    <name type="ordered locus">KLLA0E00859g</name>
</gene>
<dbReference type="EMBL" id="CR382125">
    <property type="protein sequence ID" value="CAG99074.1"/>
    <property type="molecule type" value="Genomic_DNA"/>
</dbReference>
<dbReference type="RefSeq" id="XP_453987.1">
    <property type="nucleotide sequence ID" value="XM_453987.1"/>
</dbReference>
<dbReference type="SMR" id="Q6CQ02"/>
<dbReference type="FunCoup" id="Q6CQ02">
    <property type="interactions" value="29"/>
</dbReference>
<dbReference type="PaxDb" id="284590-Q6CQ02"/>
<dbReference type="KEGG" id="kla:KLLA0_E00859g"/>
<dbReference type="eggNOG" id="ENOG502S35W">
    <property type="taxonomic scope" value="Eukaryota"/>
</dbReference>
<dbReference type="HOGENOM" id="CLU_106818_0_0_1"/>
<dbReference type="InParanoid" id="Q6CQ02"/>
<dbReference type="OMA" id="FMRLKPF"/>
<dbReference type="Proteomes" id="UP000000598">
    <property type="component" value="Chromosome E"/>
</dbReference>
<dbReference type="GO" id="GO:0030437">
    <property type="term" value="P:ascospore formation"/>
    <property type="evidence" value="ECO:0007669"/>
    <property type="project" value="InterPro"/>
</dbReference>
<dbReference type="InterPro" id="IPR016613">
    <property type="entry name" value="Irc19"/>
</dbReference>
<dbReference type="PIRSF" id="PIRSF013329">
    <property type="entry name" value="UCP013329"/>
    <property type="match status" value="1"/>
</dbReference>
<sequence>MVLIKSRKSIVTATNVCINSSSKFYLTEEQVQSLGDKEFLTASYRRFLRMRQFISKRQMVKESYTTYLRYKFKIEDFELKRSKLLSVSGMSAMDFRSSVQKSLCFLIKAFSISDAYSKDMIDDSHKCKKIIKNLLTVDYHRNRIINRSSNMYQYYRKDFTFFTDGQNIGLKQFEENLMRLNECLGTRL</sequence>
<proteinExistence type="inferred from homology"/>
<evidence type="ECO:0000250" key="1"/>
<evidence type="ECO:0000305" key="2"/>
<comment type="function">
    <text evidence="1">Involved in sporulation and maintenance of the mitochondrial DNA. Is probably involved in a pathway contributing to genomic integrity (By similarity).</text>
</comment>
<comment type="similarity">
    <text evidence="2">Belongs to the IRC19 family.</text>
</comment>